<organism>
    <name type="scientific">Pseudomonas fluorescens (strain SBW25)</name>
    <dbReference type="NCBI Taxonomy" id="216595"/>
    <lineage>
        <taxon>Bacteria</taxon>
        <taxon>Pseudomonadati</taxon>
        <taxon>Pseudomonadota</taxon>
        <taxon>Gammaproteobacteria</taxon>
        <taxon>Pseudomonadales</taxon>
        <taxon>Pseudomonadaceae</taxon>
        <taxon>Pseudomonas</taxon>
    </lineage>
</organism>
<feature type="chain" id="PRO_1000203187" description="Tryptophan synthase alpha chain">
    <location>
        <begin position="1"/>
        <end position="269"/>
    </location>
</feature>
<feature type="active site" description="Proton acceptor" evidence="1">
    <location>
        <position position="49"/>
    </location>
</feature>
<feature type="active site" description="Proton acceptor" evidence="1">
    <location>
        <position position="60"/>
    </location>
</feature>
<keyword id="KW-0028">Amino-acid biosynthesis</keyword>
<keyword id="KW-0057">Aromatic amino acid biosynthesis</keyword>
<keyword id="KW-0456">Lyase</keyword>
<keyword id="KW-0822">Tryptophan biosynthesis</keyword>
<accession>C3K568</accession>
<sequence length="269" mass="28557">MSRLQTRFAQLKEQNRAALVTFVTAGDPGYDTSLAILKGLPAAGADVIELGMPFTDPMADGPAIQLANIRALEAKQNLVKTLQMVREFRKDNNDTPLVLMGYFNPIHKYGVPKFIADAKEAGVDGLIVVDMPPEHNGELCDPAQAAGIDFIRLTTPTTDDVRLPTVLNGSSGFVYYVSVAGVTGAGAATLEHVEEAVTRLRRHTDLPISIGFGIRTPEQAAAIARLADGVVVGSALIDHIANASNDQQAIDGVLSLCAALSEGVRNARK</sequence>
<evidence type="ECO:0000255" key="1">
    <source>
        <dbReference type="HAMAP-Rule" id="MF_00131"/>
    </source>
</evidence>
<comment type="function">
    <text evidence="1">The alpha subunit is responsible for the aldol cleavage of indoleglycerol phosphate to indole and glyceraldehyde 3-phosphate.</text>
</comment>
<comment type="catalytic activity">
    <reaction evidence="1">
        <text>(1S,2R)-1-C-(indol-3-yl)glycerol 3-phosphate + L-serine = D-glyceraldehyde 3-phosphate + L-tryptophan + H2O</text>
        <dbReference type="Rhea" id="RHEA:10532"/>
        <dbReference type="ChEBI" id="CHEBI:15377"/>
        <dbReference type="ChEBI" id="CHEBI:33384"/>
        <dbReference type="ChEBI" id="CHEBI:57912"/>
        <dbReference type="ChEBI" id="CHEBI:58866"/>
        <dbReference type="ChEBI" id="CHEBI:59776"/>
        <dbReference type="EC" id="4.2.1.20"/>
    </reaction>
</comment>
<comment type="pathway">
    <text evidence="1">Amino-acid biosynthesis; L-tryptophan biosynthesis; L-tryptophan from chorismate: step 5/5.</text>
</comment>
<comment type="subunit">
    <text evidence="1">Tetramer of two alpha and two beta chains.</text>
</comment>
<comment type="similarity">
    <text evidence="1">Belongs to the TrpA family.</text>
</comment>
<gene>
    <name evidence="1" type="primary">trpA</name>
    <name type="ordered locus">PFLU_0035</name>
</gene>
<reference key="1">
    <citation type="journal article" date="2009" name="Genome Biol.">
        <title>Genomic and genetic analyses of diversity and plant interactions of Pseudomonas fluorescens.</title>
        <authorList>
            <person name="Silby M.W."/>
            <person name="Cerdeno-Tarraga A.M."/>
            <person name="Vernikos G.S."/>
            <person name="Giddens S.R."/>
            <person name="Jackson R.W."/>
            <person name="Preston G.M."/>
            <person name="Zhang X.-X."/>
            <person name="Moon C.D."/>
            <person name="Gehrig S.M."/>
            <person name="Godfrey S.A.C."/>
            <person name="Knight C.G."/>
            <person name="Malone J.G."/>
            <person name="Robinson Z."/>
            <person name="Spiers A.J."/>
            <person name="Harris S."/>
            <person name="Challis G.L."/>
            <person name="Yaxley A.M."/>
            <person name="Harris D."/>
            <person name="Seeger K."/>
            <person name="Murphy L."/>
            <person name="Rutter S."/>
            <person name="Squares R."/>
            <person name="Quail M.A."/>
            <person name="Saunders E."/>
            <person name="Mavromatis K."/>
            <person name="Brettin T.S."/>
            <person name="Bentley S.D."/>
            <person name="Hothersall J."/>
            <person name="Stephens E."/>
            <person name="Thomas C.M."/>
            <person name="Parkhill J."/>
            <person name="Levy S.B."/>
            <person name="Rainey P.B."/>
            <person name="Thomson N.R."/>
        </authorList>
    </citation>
    <scope>NUCLEOTIDE SEQUENCE [LARGE SCALE GENOMIC DNA]</scope>
    <source>
        <strain>SBW25</strain>
    </source>
</reference>
<dbReference type="EC" id="4.2.1.20" evidence="1"/>
<dbReference type="EMBL" id="AM181176">
    <property type="protein sequence ID" value="CAY46320.1"/>
    <property type="molecule type" value="Genomic_DNA"/>
</dbReference>
<dbReference type="RefSeq" id="WP_012721482.1">
    <property type="nucleotide sequence ID" value="NC_012660.1"/>
</dbReference>
<dbReference type="SMR" id="C3K568"/>
<dbReference type="STRING" id="294.SRM1_00163"/>
<dbReference type="GeneID" id="93461581"/>
<dbReference type="PATRIC" id="fig|216595.4.peg.277"/>
<dbReference type="eggNOG" id="COG0159">
    <property type="taxonomic scope" value="Bacteria"/>
</dbReference>
<dbReference type="HOGENOM" id="CLU_016734_0_4_6"/>
<dbReference type="OrthoDB" id="9804578at2"/>
<dbReference type="UniPathway" id="UPA00035">
    <property type="reaction ID" value="UER00044"/>
</dbReference>
<dbReference type="GO" id="GO:0005829">
    <property type="term" value="C:cytosol"/>
    <property type="evidence" value="ECO:0007669"/>
    <property type="project" value="TreeGrafter"/>
</dbReference>
<dbReference type="GO" id="GO:0004834">
    <property type="term" value="F:tryptophan synthase activity"/>
    <property type="evidence" value="ECO:0007669"/>
    <property type="project" value="UniProtKB-UniRule"/>
</dbReference>
<dbReference type="CDD" id="cd04724">
    <property type="entry name" value="Tryptophan_synthase_alpha"/>
    <property type="match status" value="1"/>
</dbReference>
<dbReference type="FunFam" id="3.20.20.70:FF:000037">
    <property type="entry name" value="Tryptophan synthase alpha chain"/>
    <property type="match status" value="1"/>
</dbReference>
<dbReference type="Gene3D" id="3.20.20.70">
    <property type="entry name" value="Aldolase class I"/>
    <property type="match status" value="1"/>
</dbReference>
<dbReference type="HAMAP" id="MF_00131">
    <property type="entry name" value="Trp_synth_alpha"/>
    <property type="match status" value="1"/>
</dbReference>
<dbReference type="InterPro" id="IPR013785">
    <property type="entry name" value="Aldolase_TIM"/>
</dbReference>
<dbReference type="InterPro" id="IPR011060">
    <property type="entry name" value="RibuloseP-bd_barrel"/>
</dbReference>
<dbReference type="InterPro" id="IPR018204">
    <property type="entry name" value="Trp_synthase_alpha_AS"/>
</dbReference>
<dbReference type="InterPro" id="IPR002028">
    <property type="entry name" value="Trp_synthase_suA"/>
</dbReference>
<dbReference type="NCBIfam" id="TIGR00262">
    <property type="entry name" value="trpA"/>
    <property type="match status" value="1"/>
</dbReference>
<dbReference type="PANTHER" id="PTHR43406:SF1">
    <property type="entry name" value="TRYPTOPHAN SYNTHASE ALPHA CHAIN, CHLOROPLASTIC"/>
    <property type="match status" value="1"/>
</dbReference>
<dbReference type="PANTHER" id="PTHR43406">
    <property type="entry name" value="TRYPTOPHAN SYNTHASE, ALPHA CHAIN"/>
    <property type="match status" value="1"/>
</dbReference>
<dbReference type="Pfam" id="PF00290">
    <property type="entry name" value="Trp_syntA"/>
    <property type="match status" value="1"/>
</dbReference>
<dbReference type="SUPFAM" id="SSF51366">
    <property type="entry name" value="Ribulose-phoshate binding barrel"/>
    <property type="match status" value="1"/>
</dbReference>
<dbReference type="PROSITE" id="PS00167">
    <property type="entry name" value="TRP_SYNTHASE_ALPHA"/>
    <property type="match status" value="1"/>
</dbReference>
<name>TRPA_PSEFS</name>
<protein>
    <recommendedName>
        <fullName evidence="1">Tryptophan synthase alpha chain</fullName>
        <ecNumber evidence="1">4.2.1.20</ecNumber>
    </recommendedName>
</protein>
<proteinExistence type="inferred from homology"/>